<gene>
    <name evidence="1" type="primary">rsmH</name>
    <name type="synonym">mraW</name>
    <name type="ordered locus">PCC7424_0163</name>
</gene>
<accession>B7K9F0</accession>
<evidence type="ECO:0000255" key="1">
    <source>
        <dbReference type="HAMAP-Rule" id="MF_01007"/>
    </source>
</evidence>
<evidence type="ECO:0000256" key="2">
    <source>
        <dbReference type="SAM" id="MobiDB-lite"/>
    </source>
</evidence>
<dbReference type="EC" id="2.1.1.199" evidence="1"/>
<dbReference type="EMBL" id="CP001291">
    <property type="protein sequence ID" value="ACK68633.1"/>
    <property type="molecule type" value="Genomic_DNA"/>
</dbReference>
<dbReference type="RefSeq" id="WP_012597583.1">
    <property type="nucleotide sequence ID" value="NC_011729.1"/>
</dbReference>
<dbReference type="SMR" id="B7K9F0"/>
<dbReference type="STRING" id="65393.PCC7424_0163"/>
<dbReference type="KEGG" id="cyc:PCC7424_0163"/>
<dbReference type="eggNOG" id="COG0275">
    <property type="taxonomic scope" value="Bacteria"/>
</dbReference>
<dbReference type="HOGENOM" id="CLU_038422_3_0_3"/>
<dbReference type="OrthoDB" id="9806637at2"/>
<dbReference type="Proteomes" id="UP000002384">
    <property type="component" value="Chromosome"/>
</dbReference>
<dbReference type="GO" id="GO:0005737">
    <property type="term" value="C:cytoplasm"/>
    <property type="evidence" value="ECO:0007669"/>
    <property type="project" value="UniProtKB-SubCell"/>
</dbReference>
<dbReference type="GO" id="GO:0071424">
    <property type="term" value="F:rRNA (cytosine-N4-)-methyltransferase activity"/>
    <property type="evidence" value="ECO:0007669"/>
    <property type="project" value="UniProtKB-UniRule"/>
</dbReference>
<dbReference type="GO" id="GO:0070475">
    <property type="term" value="P:rRNA base methylation"/>
    <property type="evidence" value="ECO:0007669"/>
    <property type="project" value="UniProtKB-UniRule"/>
</dbReference>
<dbReference type="CDD" id="cd02440">
    <property type="entry name" value="AdoMet_MTases"/>
    <property type="match status" value="1"/>
</dbReference>
<dbReference type="Gene3D" id="1.10.150.170">
    <property type="entry name" value="Putative methyltransferase TM0872, insert domain"/>
    <property type="match status" value="1"/>
</dbReference>
<dbReference type="Gene3D" id="3.40.50.150">
    <property type="entry name" value="Vaccinia Virus protein VP39"/>
    <property type="match status" value="1"/>
</dbReference>
<dbReference type="HAMAP" id="MF_01007">
    <property type="entry name" value="16SrRNA_methyltr_H"/>
    <property type="match status" value="1"/>
</dbReference>
<dbReference type="InterPro" id="IPR002903">
    <property type="entry name" value="RsmH"/>
</dbReference>
<dbReference type="InterPro" id="IPR023397">
    <property type="entry name" value="SAM-dep_MeTrfase_MraW_recog"/>
</dbReference>
<dbReference type="InterPro" id="IPR029063">
    <property type="entry name" value="SAM-dependent_MTases_sf"/>
</dbReference>
<dbReference type="NCBIfam" id="TIGR00006">
    <property type="entry name" value="16S rRNA (cytosine(1402)-N(4))-methyltransferase RsmH"/>
    <property type="match status" value="1"/>
</dbReference>
<dbReference type="PANTHER" id="PTHR11265:SF0">
    <property type="entry name" value="12S RRNA N4-METHYLCYTIDINE METHYLTRANSFERASE"/>
    <property type="match status" value="1"/>
</dbReference>
<dbReference type="PANTHER" id="PTHR11265">
    <property type="entry name" value="S-ADENOSYL-METHYLTRANSFERASE MRAW"/>
    <property type="match status" value="1"/>
</dbReference>
<dbReference type="Pfam" id="PF01795">
    <property type="entry name" value="Methyltransf_5"/>
    <property type="match status" value="1"/>
</dbReference>
<dbReference type="PIRSF" id="PIRSF004486">
    <property type="entry name" value="MraW"/>
    <property type="match status" value="1"/>
</dbReference>
<dbReference type="SUPFAM" id="SSF81799">
    <property type="entry name" value="Putative methyltransferase TM0872, insert domain"/>
    <property type="match status" value="1"/>
</dbReference>
<dbReference type="SUPFAM" id="SSF53335">
    <property type="entry name" value="S-adenosyl-L-methionine-dependent methyltransferases"/>
    <property type="match status" value="1"/>
</dbReference>
<feature type="chain" id="PRO_0000386837" description="Ribosomal RNA small subunit methyltransferase H">
    <location>
        <begin position="1"/>
        <end position="299"/>
    </location>
</feature>
<feature type="region of interest" description="Disordered" evidence="2">
    <location>
        <begin position="275"/>
        <end position="299"/>
    </location>
</feature>
<feature type="compositionally biased region" description="Basic residues" evidence="2">
    <location>
        <begin position="284"/>
        <end position="299"/>
    </location>
</feature>
<feature type="binding site" evidence="1">
    <location>
        <begin position="45"/>
        <end position="47"/>
    </location>
    <ligand>
        <name>S-adenosyl-L-methionine</name>
        <dbReference type="ChEBI" id="CHEBI:59789"/>
    </ligand>
</feature>
<feature type="binding site" evidence="1">
    <location>
        <position position="64"/>
    </location>
    <ligand>
        <name>S-adenosyl-L-methionine</name>
        <dbReference type="ChEBI" id="CHEBI:59789"/>
    </ligand>
</feature>
<feature type="binding site" evidence="1">
    <location>
        <position position="92"/>
    </location>
    <ligand>
        <name>S-adenosyl-L-methionine</name>
        <dbReference type="ChEBI" id="CHEBI:59789"/>
    </ligand>
</feature>
<feature type="binding site" evidence="1">
    <location>
        <position position="108"/>
    </location>
    <ligand>
        <name>S-adenosyl-L-methionine</name>
        <dbReference type="ChEBI" id="CHEBI:59789"/>
    </ligand>
</feature>
<feature type="binding site" evidence="1">
    <location>
        <position position="115"/>
    </location>
    <ligand>
        <name>S-adenosyl-L-methionine</name>
        <dbReference type="ChEBI" id="CHEBI:59789"/>
    </ligand>
</feature>
<name>RSMH_GLOC7</name>
<sequence length="299" mass="33475">MSKVLQMSTVNSLAFIHIPVLTQELIKGLDICPGGHYLDATVGGGGHSRQILETYGDVQVTAIDRDEVAIAAATTNLADYNTDRLTFWTGNFADYDPGNLKFDGIIADLGVSSPQLDSPERGFSFRLDAPLDMRMDRRQSTTAADIINSYSEIELANLFYNYGEERLSRQIAKQIVKQRPFFSTTELAEVISRSVPPKYRYGRIHPATRVFQGLRIAVNQELDSLESFLAKSPSWLKTNGIIGIISFHSLEDRIVKHQLRASPLLKVLTKKPIIPQSDEQAKNPRSRSAKLRLAQRKEQ</sequence>
<reference key="1">
    <citation type="journal article" date="2011" name="MBio">
        <title>Novel metabolic attributes of the genus Cyanothece, comprising a group of unicellular nitrogen-fixing Cyanobacteria.</title>
        <authorList>
            <person name="Bandyopadhyay A."/>
            <person name="Elvitigala T."/>
            <person name="Welsh E."/>
            <person name="Stockel J."/>
            <person name="Liberton M."/>
            <person name="Min H."/>
            <person name="Sherman L.A."/>
            <person name="Pakrasi H.B."/>
        </authorList>
    </citation>
    <scope>NUCLEOTIDE SEQUENCE [LARGE SCALE GENOMIC DNA]</scope>
    <source>
        <strain>PCC 7424</strain>
    </source>
</reference>
<protein>
    <recommendedName>
        <fullName evidence="1">Ribosomal RNA small subunit methyltransferase H</fullName>
        <ecNumber evidence="1">2.1.1.199</ecNumber>
    </recommendedName>
    <alternativeName>
        <fullName evidence="1">16S rRNA m(4)C1402 methyltransferase</fullName>
    </alternativeName>
    <alternativeName>
        <fullName evidence="1">rRNA (cytosine-N(4)-)-methyltransferase RsmH</fullName>
    </alternativeName>
</protein>
<organism>
    <name type="scientific">Gloeothece citriformis (strain PCC 7424)</name>
    <name type="common">Cyanothece sp. (strain PCC 7424)</name>
    <dbReference type="NCBI Taxonomy" id="65393"/>
    <lineage>
        <taxon>Bacteria</taxon>
        <taxon>Bacillati</taxon>
        <taxon>Cyanobacteriota</taxon>
        <taxon>Cyanophyceae</taxon>
        <taxon>Oscillatoriophycideae</taxon>
        <taxon>Chroococcales</taxon>
        <taxon>Aphanothecaceae</taxon>
        <taxon>Gloeothece</taxon>
        <taxon>Gloeothece citriformis</taxon>
    </lineage>
</organism>
<keyword id="KW-0963">Cytoplasm</keyword>
<keyword id="KW-0489">Methyltransferase</keyword>
<keyword id="KW-1185">Reference proteome</keyword>
<keyword id="KW-0698">rRNA processing</keyword>
<keyword id="KW-0949">S-adenosyl-L-methionine</keyword>
<keyword id="KW-0808">Transferase</keyword>
<comment type="function">
    <text evidence="1">Specifically methylates the N4 position of cytidine in position 1402 (C1402) of 16S rRNA.</text>
</comment>
<comment type="catalytic activity">
    <reaction evidence="1">
        <text>cytidine(1402) in 16S rRNA + S-adenosyl-L-methionine = N(4)-methylcytidine(1402) in 16S rRNA + S-adenosyl-L-homocysteine + H(+)</text>
        <dbReference type="Rhea" id="RHEA:42928"/>
        <dbReference type="Rhea" id="RHEA-COMP:10286"/>
        <dbReference type="Rhea" id="RHEA-COMP:10287"/>
        <dbReference type="ChEBI" id="CHEBI:15378"/>
        <dbReference type="ChEBI" id="CHEBI:57856"/>
        <dbReference type="ChEBI" id="CHEBI:59789"/>
        <dbReference type="ChEBI" id="CHEBI:74506"/>
        <dbReference type="ChEBI" id="CHEBI:82748"/>
        <dbReference type="EC" id="2.1.1.199"/>
    </reaction>
</comment>
<comment type="subcellular location">
    <subcellularLocation>
        <location evidence="1">Cytoplasm</location>
    </subcellularLocation>
</comment>
<comment type="similarity">
    <text evidence="1">Belongs to the methyltransferase superfamily. RsmH family.</text>
</comment>
<proteinExistence type="inferred from homology"/>